<feature type="chain" id="PRO_1000050801" description="Probable sugar efflux transporter">
    <location>
        <begin position="1"/>
        <end position="396"/>
    </location>
</feature>
<feature type="transmembrane region" description="Helical" evidence="1">
    <location>
        <begin position="15"/>
        <end position="35"/>
    </location>
</feature>
<feature type="transmembrane region" description="Helical" evidence="1">
    <location>
        <begin position="50"/>
        <end position="70"/>
    </location>
</feature>
<feature type="transmembrane region" description="Helical" evidence="1">
    <location>
        <begin position="81"/>
        <end position="101"/>
    </location>
</feature>
<feature type="transmembrane region" description="Helical" evidence="1">
    <location>
        <begin position="103"/>
        <end position="123"/>
    </location>
</feature>
<feature type="transmembrane region" description="Helical" evidence="1">
    <location>
        <begin position="136"/>
        <end position="156"/>
    </location>
</feature>
<feature type="transmembrane region" description="Helical" evidence="1">
    <location>
        <begin position="170"/>
        <end position="190"/>
    </location>
</feature>
<feature type="transmembrane region" description="Helical" evidence="1">
    <location>
        <begin position="209"/>
        <end position="229"/>
    </location>
</feature>
<feature type="transmembrane region" description="Helical" evidence="1">
    <location>
        <begin position="246"/>
        <end position="266"/>
    </location>
</feature>
<feature type="transmembrane region" description="Helical" evidence="1">
    <location>
        <begin position="276"/>
        <end position="296"/>
    </location>
</feature>
<feature type="transmembrane region" description="Helical" evidence="1">
    <location>
        <begin position="298"/>
        <end position="318"/>
    </location>
</feature>
<feature type="transmembrane region" description="Helical" evidence="1">
    <location>
        <begin position="333"/>
        <end position="353"/>
    </location>
</feature>
<feature type="transmembrane region" description="Helical" evidence="1">
    <location>
        <begin position="365"/>
        <end position="385"/>
    </location>
</feature>
<gene>
    <name evidence="1" type="primary">sotB</name>
    <name type="ordered locus">PA14_10750</name>
</gene>
<evidence type="ECO:0000255" key="1">
    <source>
        <dbReference type="HAMAP-Rule" id="MF_00517"/>
    </source>
</evidence>
<reference key="1">
    <citation type="journal article" date="2006" name="Genome Biol.">
        <title>Genomic analysis reveals that Pseudomonas aeruginosa virulence is combinatorial.</title>
        <authorList>
            <person name="Lee D.G."/>
            <person name="Urbach J.M."/>
            <person name="Wu G."/>
            <person name="Liberati N.T."/>
            <person name="Feinbaum R.L."/>
            <person name="Miyata S."/>
            <person name="Diggins L.T."/>
            <person name="He J."/>
            <person name="Saucier M."/>
            <person name="Deziel E."/>
            <person name="Friedman L."/>
            <person name="Li L."/>
            <person name="Grills G."/>
            <person name="Montgomery K."/>
            <person name="Kucherlapati R."/>
            <person name="Rahme L.G."/>
            <person name="Ausubel F.M."/>
        </authorList>
    </citation>
    <scope>NUCLEOTIDE SEQUENCE [LARGE SCALE GENOMIC DNA]</scope>
    <source>
        <strain>UCBPP-PA14</strain>
    </source>
</reference>
<protein>
    <recommendedName>
        <fullName evidence="1">Probable sugar efflux transporter</fullName>
    </recommendedName>
</protein>
<sequence length="396" mass="41855">MDSTSETRSGSWLSVIALALAAFIFNTTEFVPVGLLSDIGHSFEMPTSQVGLMLTIYAWVVSLASLPMMLLTRNIERRKLLVGVFLLFIASHVLSGLAWSFQVLMLSRIGIAFAHAVFWAITASLAVRVAPPGQQAKALGLLATGTTLAMVLGIPLGRVVGEALGWRTTFMAIAGLSVLTLLYLARSLPLLPSQNSGSLRSLPMLFRRPALVCLYVLTVVVISAQFTAYSYIEPFAKQVAQMSGEATTLLLLLFGGAGIFGSILFSRYSEAFPRGFLLAAILALGSSLALLLPLSAQPTWLMALSLLWGMSIMCFGLAQQSRVLRLASDATDVAMALFSGLYNVGIGAGALLGSVVSERMGLASIGNVGAALALAGLLLALFAALRYAEALKTTSL</sequence>
<accession>Q02SS7</accession>
<organism>
    <name type="scientific">Pseudomonas aeruginosa (strain UCBPP-PA14)</name>
    <dbReference type="NCBI Taxonomy" id="208963"/>
    <lineage>
        <taxon>Bacteria</taxon>
        <taxon>Pseudomonadati</taxon>
        <taxon>Pseudomonadota</taxon>
        <taxon>Gammaproteobacteria</taxon>
        <taxon>Pseudomonadales</taxon>
        <taxon>Pseudomonadaceae</taxon>
        <taxon>Pseudomonas</taxon>
    </lineage>
</organism>
<comment type="function">
    <text evidence="1">Involved in the efflux of sugars. The physiological role may be the reduction of the intracellular concentration of toxic sugars or sugar metabolites.</text>
</comment>
<comment type="subcellular location">
    <subcellularLocation>
        <location evidence="1">Cell inner membrane</location>
        <topology evidence="1">Multi-pass membrane protein</topology>
    </subcellularLocation>
</comment>
<comment type="similarity">
    <text evidence="1">Belongs to the major facilitator superfamily. SotB (TC 2.A.1.2) family.</text>
</comment>
<proteinExistence type="inferred from homology"/>
<name>SOTB_PSEAB</name>
<keyword id="KW-0997">Cell inner membrane</keyword>
<keyword id="KW-1003">Cell membrane</keyword>
<keyword id="KW-0472">Membrane</keyword>
<keyword id="KW-0762">Sugar transport</keyword>
<keyword id="KW-0812">Transmembrane</keyword>
<keyword id="KW-1133">Transmembrane helix</keyword>
<keyword id="KW-0813">Transport</keyword>
<dbReference type="EMBL" id="CP000438">
    <property type="protein sequence ID" value="ABJ13383.1"/>
    <property type="molecule type" value="Genomic_DNA"/>
</dbReference>
<dbReference type="RefSeq" id="WP_003101284.1">
    <property type="nucleotide sequence ID" value="NZ_CP034244.1"/>
</dbReference>
<dbReference type="SMR" id="Q02SS7"/>
<dbReference type="KEGG" id="pau:PA14_10750"/>
<dbReference type="PseudoCAP" id="PA14_10750"/>
<dbReference type="HOGENOM" id="CLU_001265_61_1_6"/>
<dbReference type="BioCyc" id="PAER208963:G1G74-891-MONOMER"/>
<dbReference type="Proteomes" id="UP000000653">
    <property type="component" value="Chromosome"/>
</dbReference>
<dbReference type="GO" id="GO:0005886">
    <property type="term" value="C:plasma membrane"/>
    <property type="evidence" value="ECO:0007669"/>
    <property type="project" value="UniProtKB-SubCell"/>
</dbReference>
<dbReference type="GO" id="GO:0015144">
    <property type="term" value="F:carbohydrate transmembrane transporter activity"/>
    <property type="evidence" value="ECO:0007669"/>
    <property type="project" value="UniProtKB-UniRule"/>
</dbReference>
<dbReference type="CDD" id="cd17324">
    <property type="entry name" value="MFS_NepI_like"/>
    <property type="match status" value="1"/>
</dbReference>
<dbReference type="Gene3D" id="1.20.1250.20">
    <property type="entry name" value="MFS general substrate transporter like domains"/>
    <property type="match status" value="1"/>
</dbReference>
<dbReference type="HAMAP" id="MF_00517">
    <property type="entry name" value="MFS_SotB"/>
    <property type="match status" value="1"/>
</dbReference>
<dbReference type="InterPro" id="IPR011701">
    <property type="entry name" value="MFS"/>
</dbReference>
<dbReference type="InterPro" id="IPR020846">
    <property type="entry name" value="MFS_dom"/>
</dbReference>
<dbReference type="InterPro" id="IPR050189">
    <property type="entry name" value="MFS_Efflux_Transporters"/>
</dbReference>
<dbReference type="InterPro" id="IPR036259">
    <property type="entry name" value="MFS_trans_sf"/>
</dbReference>
<dbReference type="InterPro" id="IPR023495">
    <property type="entry name" value="Sugar_effux_transptr_put"/>
</dbReference>
<dbReference type="NCBIfam" id="NF002921">
    <property type="entry name" value="PRK03545.1"/>
    <property type="match status" value="1"/>
</dbReference>
<dbReference type="PANTHER" id="PTHR43124">
    <property type="entry name" value="PURINE EFFLUX PUMP PBUE"/>
    <property type="match status" value="1"/>
</dbReference>
<dbReference type="PANTHER" id="PTHR43124:SF4">
    <property type="entry name" value="SUGAR EFFLUX TRANSPORTER"/>
    <property type="match status" value="1"/>
</dbReference>
<dbReference type="Pfam" id="PF07690">
    <property type="entry name" value="MFS_1"/>
    <property type="match status" value="1"/>
</dbReference>
<dbReference type="SUPFAM" id="SSF103473">
    <property type="entry name" value="MFS general substrate transporter"/>
    <property type="match status" value="1"/>
</dbReference>
<dbReference type="PROSITE" id="PS50850">
    <property type="entry name" value="MFS"/>
    <property type="match status" value="1"/>
</dbReference>